<feature type="chain" id="PRO_1000188269" description="Erythronate-4-phosphate dehydrogenase">
    <location>
        <begin position="1"/>
        <end position="378"/>
    </location>
</feature>
<feature type="active site" evidence="1">
    <location>
        <position position="208"/>
    </location>
</feature>
<feature type="active site" evidence="1">
    <location>
        <position position="237"/>
    </location>
</feature>
<feature type="active site" description="Proton donor" evidence="1">
    <location>
        <position position="254"/>
    </location>
</feature>
<feature type="binding site" evidence="1">
    <location>
        <position position="45"/>
    </location>
    <ligand>
        <name>substrate</name>
    </ligand>
</feature>
<feature type="binding site" evidence="1">
    <location>
        <position position="66"/>
    </location>
    <ligand>
        <name>substrate</name>
    </ligand>
</feature>
<feature type="binding site" evidence="1">
    <location>
        <position position="146"/>
    </location>
    <ligand>
        <name>NAD(+)</name>
        <dbReference type="ChEBI" id="CHEBI:57540"/>
    </ligand>
</feature>
<feature type="binding site" evidence="1">
    <location>
        <position position="175"/>
    </location>
    <ligand>
        <name>NAD(+)</name>
        <dbReference type="ChEBI" id="CHEBI:57540"/>
    </ligand>
</feature>
<feature type="binding site" evidence="1">
    <location>
        <position position="232"/>
    </location>
    <ligand>
        <name>NAD(+)</name>
        <dbReference type="ChEBI" id="CHEBI:57540"/>
    </ligand>
</feature>
<feature type="binding site" evidence="1">
    <location>
        <position position="257"/>
    </location>
    <ligand>
        <name>NAD(+)</name>
        <dbReference type="ChEBI" id="CHEBI:57540"/>
    </ligand>
</feature>
<feature type="binding site" evidence="1">
    <location>
        <position position="258"/>
    </location>
    <ligand>
        <name>substrate</name>
    </ligand>
</feature>
<reference key="1">
    <citation type="journal article" date="2009" name="PLoS Genet.">
        <title>Organised genome dynamics in the Escherichia coli species results in highly diverse adaptive paths.</title>
        <authorList>
            <person name="Touchon M."/>
            <person name="Hoede C."/>
            <person name="Tenaillon O."/>
            <person name="Barbe V."/>
            <person name="Baeriswyl S."/>
            <person name="Bidet P."/>
            <person name="Bingen E."/>
            <person name="Bonacorsi S."/>
            <person name="Bouchier C."/>
            <person name="Bouvet O."/>
            <person name="Calteau A."/>
            <person name="Chiapello H."/>
            <person name="Clermont O."/>
            <person name="Cruveiller S."/>
            <person name="Danchin A."/>
            <person name="Diard M."/>
            <person name="Dossat C."/>
            <person name="Karoui M.E."/>
            <person name="Frapy E."/>
            <person name="Garry L."/>
            <person name="Ghigo J.M."/>
            <person name="Gilles A.M."/>
            <person name="Johnson J."/>
            <person name="Le Bouguenec C."/>
            <person name="Lescat M."/>
            <person name="Mangenot S."/>
            <person name="Martinez-Jehanne V."/>
            <person name="Matic I."/>
            <person name="Nassif X."/>
            <person name="Oztas S."/>
            <person name="Petit M.A."/>
            <person name="Pichon C."/>
            <person name="Rouy Z."/>
            <person name="Ruf C.S."/>
            <person name="Schneider D."/>
            <person name="Tourret J."/>
            <person name="Vacherie B."/>
            <person name="Vallenet D."/>
            <person name="Medigue C."/>
            <person name="Rocha E.P.C."/>
            <person name="Denamur E."/>
        </authorList>
    </citation>
    <scope>NUCLEOTIDE SEQUENCE [LARGE SCALE GENOMIC DNA]</scope>
    <source>
        <strain>ATCC 35469 / DSM 13698 / BCRC 15582 / CCUG 18766 / IAM 14443 / JCM 21226 / LMG 7866 / NBRC 102419 / NCTC 12128 / CDC 0568-73</strain>
    </source>
</reference>
<keyword id="KW-0963">Cytoplasm</keyword>
<keyword id="KW-0520">NAD</keyword>
<keyword id="KW-0560">Oxidoreductase</keyword>
<keyword id="KW-0664">Pyridoxine biosynthesis</keyword>
<comment type="function">
    <text evidence="1">Catalyzes the oxidation of erythronate-4-phosphate to 3-hydroxy-2-oxo-4-phosphonooxybutanoate.</text>
</comment>
<comment type="catalytic activity">
    <reaction evidence="1">
        <text>4-phospho-D-erythronate + NAD(+) = (R)-3-hydroxy-2-oxo-4-phosphooxybutanoate + NADH + H(+)</text>
        <dbReference type="Rhea" id="RHEA:18829"/>
        <dbReference type="ChEBI" id="CHEBI:15378"/>
        <dbReference type="ChEBI" id="CHEBI:57540"/>
        <dbReference type="ChEBI" id="CHEBI:57945"/>
        <dbReference type="ChEBI" id="CHEBI:58538"/>
        <dbReference type="ChEBI" id="CHEBI:58766"/>
        <dbReference type="EC" id="1.1.1.290"/>
    </reaction>
</comment>
<comment type="pathway">
    <text evidence="1">Cofactor biosynthesis; pyridoxine 5'-phosphate biosynthesis; pyridoxine 5'-phosphate from D-erythrose 4-phosphate: step 2/5.</text>
</comment>
<comment type="subunit">
    <text evidence="1">Homodimer.</text>
</comment>
<comment type="subcellular location">
    <subcellularLocation>
        <location evidence="1">Cytoplasm</location>
    </subcellularLocation>
</comment>
<comment type="similarity">
    <text evidence="1">Belongs to the D-isomer specific 2-hydroxyacid dehydrogenase family. PdxB subfamily.</text>
</comment>
<evidence type="ECO:0000255" key="1">
    <source>
        <dbReference type="HAMAP-Rule" id="MF_01825"/>
    </source>
</evidence>
<protein>
    <recommendedName>
        <fullName evidence="1">Erythronate-4-phosphate dehydrogenase</fullName>
        <ecNumber evidence="1">1.1.1.290</ecNumber>
    </recommendedName>
</protein>
<sequence length="378" mass="41404">MKILVDENMPYARELFSRLGEVKAVPGRPIPVAQLADADALMVRSVTKVNESLLAGKPIKFVGTATAGTDHVDEAWLKQAGIGFSAAPGCNAIAVVEYVFSSLLMLAERDGFSLHERTVGIVGVGNVGRRLQARLEALGIKTLLCDPPRADRGDEGDFRSLDELVQHADILTFHTPLFKDGPYKTLHLADEKLIRSLKPGAILINACRGAVVDNTALLTCLNEGQKLSVVLDVWEGEPELNVELLKKVDIGTPHIAGYTLEGKARGTTQVFEAYSKFIGHEQHVALDTLLPAPEFGRITLHGLLDQPTLKRLVHLVYDVRRDDAPLRKVAGIPGEFDKLRKNYLERREWSSLYVICDDASAASLLCKLGFNAVHHPAR</sequence>
<dbReference type="EC" id="1.1.1.290" evidence="1"/>
<dbReference type="EMBL" id="CU928158">
    <property type="protein sequence ID" value="CAQ88379.1"/>
    <property type="molecule type" value="Genomic_DNA"/>
</dbReference>
<dbReference type="RefSeq" id="WP_000699167.1">
    <property type="nucleotide sequence ID" value="NC_011740.1"/>
</dbReference>
<dbReference type="SMR" id="B7LLF0"/>
<dbReference type="GeneID" id="75058096"/>
<dbReference type="KEGG" id="efe:EFER_0843"/>
<dbReference type="HOGENOM" id="CLU_019796_4_0_6"/>
<dbReference type="OrthoDB" id="9770208at2"/>
<dbReference type="UniPathway" id="UPA00244">
    <property type="reaction ID" value="UER00310"/>
</dbReference>
<dbReference type="Proteomes" id="UP000000745">
    <property type="component" value="Chromosome"/>
</dbReference>
<dbReference type="GO" id="GO:0005829">
    <property type="term" value="C:cytosol"/>
    <property type="evidence" value="ECO:0007669"/>
    <property type="project" value="UniProtKB-ARBA"/>
</dbReference>
<dbReference type="GO" id="GO:0033711">
    <property type="term" value="F:4-phosphoerythronate dehydrogenase activity"/>
    <property type="evidence" value="ECO:0007669"/>
    <property type="project" value="UniProtKB-EC"/>
</dbReference>
<dbReference type="GO" id="GO:0051287">
    <property type="term" value="F:NAD binding"/>
    <property type="evidence" value="ECO:0007669"/>
    <property type="project" value="InterPro"/>
</dbReference>
<dbReference type="GO" id="GO:0046983">
    <property type="term" value="F:protein dimerization activity"/>
    <property type="evidence" value="ECO:0007669"/>
    <property type="project" value="InterPro"/>
</dbReference>
<dbReference type="GO" id="GO:0036001">
    <property type="term" value="P:'de novo' pyridoxal 5'-phosphate biosynthetic process"/>
    <property type="evidence" value="ECO:0007669"/>
    <property type="project" value="TreeGrafter"/>
</dbReference>
<dbReference type="GO" id="GO:0008615">
    <property type="term" value="P:pyridoxine biosynthetic process"/>
    <property type="evidence" value="ECO:0007669"/>
    <property type="project" value="UniProtKB-UniRule"/>
</dbReference>
<dbReference type="CDD" id="cd12158">
    <property type="entry name" value="ErythrP_dh"/>
    <property type="match status" value="1"/>
</dbReference>
<dbReference type="FunFam" id="3.30.1370.170:FF:000001">
    <property type="entry name" value="Erythronate-4-phosphate dehydrogenase"/>
    <property type="match status" value="1"/>
</dbReference>
<dbReference type="FunFam" id="3.40.50.720:FF:000082">
    <property type="entry name" value="Erythronate-4-phosphate dehydrogenase"/>
    <property type="match status" value="1"/>
</dbReference>
<dbReference type="FunFam" id="3.40.50.720:FF:000093">
    <property type="entry name" value="Erythronate-4-phosphate dehydrogenase"/>
    <property type="match status" value="1"/>
</dbReference>
<dbReference type="Gene3D" id="3.30.1370.170">
    <property type="match status" value="1"/>
</dbReference>
<dbReference type="Gene3D" id="3.40.50.720">
    <property type="entry name" value="NAD(P)-binding Rossmann-like Domain"/>
    <property type="match status" value="2"/>
</dbReference>
<dbReference type="HAMAP" id="MF_01825">
    <property type="entry name" value="PdxB"/>
    <property type="match status" value="1"/>
</dbReference>
<dbReference type="InterPro" id="IPR006139">
    <property type="entry name" value="D-isomer_2_OHA_DH_cat_dom"/>
</dbReference>
<dbReference type="InterPro" id="IPR029753">
    <property type="entry name" value="D-isomer_DH_CS"/>
</dbReference>
<dbReference type="InterPro" id="IPR029752">
    <property type="entry name" value="D-isomer_DH_CS1"/>
</dbReference>
<dbReference type="InterPro" id="IPR006140">
    <property type="entry name" value="D-isomer_DH_NAD-bd"/>
</dbReference>
<dbReference type="InterPro" id="IPR020921">
    <property type="entry name" value="Erythronate-4-P_DHase"/>
</dbReference>
<dbReference type="InterPro" id="IPR024531">
    <property type="entry name" value="Erythronate-4-P_DHase_dimer"/>
</dbReference>
<dbReference type="InterPro" id="IPR036291">
    <property type="entry name" value="NAD(P)-bd_dom_sf"/>
</dbReference>
<dbReference type="InterPro" id="IPR038251">
    <property type="entry name" value="PdxB_dimer_sf"/>
</dbReference>
<dbReference type="NCBIfam" id="NF001309">
    <property type="entry name" value="PRK00257.1"/>
    <property type="match status" value="1"/>
</dbReference>
<dbReference type="NCBIfam" id="NF011966">
    <property type="entry name" value="PRK15438.1"/>
    <property type="match status" value="1"/>
</dbReference>
<dbReference type="PANTHER" id="PTHR42938">
    <property type="entry name" value="FORMATE DEHYDROGENASE 1"/>
    <property type="match status" value="1"/>
</dbReference>
<dbReference type="PANTHER" id="PTHR42938:SF9">
    <property type="entry name" value="FORMATE DEHYDROGENASE 1"/>
    <property type="match status" value="1"/>
</dbReference>
<dbReference type="Pfam" id="PF00389">
    <property type="entry name" value="2-Hacid_dh"/>
    <property type="match status" value="1"/>
</dbReference>
<dbReference type="Pfam" id="PF02826">
    <property type="entry name" value="2-Hacid_dh_C"/>
    <property type="match status" value="1"/>
</dbReference>
<dbReference type="Pfam" id="PF11890">
    <property type="entry name" value="DUF3410"/>
    <property type="match status" value="1"/>
</dbReference>
<dbReference type="SUPFAM" id="SSF52283">
    <property type="entry name" value="Formate/glycerate dehydrogenase catalytic domain-like"/>
    <property type="match status" value="1"/>
</dbReference>
<dbReference type="SUPFAM" id="SSF51735">
    <property type="entry name" value="NAD(P)-binding Rossmann-fold domains"/>
    <property type="match status" value="1"/>
</dbReference>
<dbReference type="PROSITE" id="PS00065">
    <property type="entry name" value="D_2_HYDROXYACID_DH_1"/>
    <property type="match status" value="1"/>
</dbReference>
<dbReference type="PROSITE" id="PS00671">
    <property type="entry name" value="D_2_HYDROXYACID_DH_3"/>
    <property type="match status" value="1"/>
</dbReference>
<organism>
    <name type="scientific">Escherichia fergusonii (strain ATCC 35469 / DSM 13698 / CCUG 18766 / IAM 14443 / JCM 21226 / LMG 7866 / NBRC 102419 / NCTC 12128 / CDC 0568-73)</name>
    <dbReference type="NCBI Taxonomy" id="585054"/>
    <lineage>
        <taxon>Bacteria</taxon>
        <taxon>Pseudomonadati</taxon>
        <taxon>Pseudomonadota</taxon>
        <taxon>Gammaproteobacteria</taxon>
        <taxon>Enterobacterales</taxon>
        <taxon>Enterobacteriaceae</taxon>
        <taxon>Escherichia</taxon>
    </lineage>
</organism>
<proteinExistence type="inferred from homology"/>
<name>PDXB_ESCF3</name>
<accession>B7LLF0</accession>
<gene>
    <name evidence="1" type="primary">pdxB</name>
    <name type="ordered locus">EFER_0843</name>
</gene>